<name>MAZE4_MYCTU</name>
<accession>P9WJ91</accession>
<accession>L0T8F3</accession>
<accession>P0A5E9</accession>
<accession>P71775</accession>
<protein>
    <recommendedName>
        <fullName evidence="5">Probable antitoxin MazE4</fullName>
    </recommendedName>
</protein>
<reference key="1">
    <citation type="journal article" date="1998" name="Nature">
        <title>Deciphering the biology of Mycobacterium tuberculosis from the complete genome sequence.</title>
        <authorList>
            <person name="Cole S.T."/>
            <person name="Brosch R."/>
            <person name="Parkhill J."/>
            <person name="Garnier T."/>
            <person name="Churcher C.M."/>
            <person name="Harris D.E."/>
            <person name="Gordon S.V."/>
            <person name="Eiglmeier K."/>
            <person name="Gas S."/>
            <person name="Barry C.E. III"/>
            <person name="Tekaia F."/>
            <person name="Badcock K."/>
            <person name="Basham D."/>
            <person name="Brown D."/>
            <person name="Chillingworth T."/>
            <person name="Connor R."/>
            <person name="Davies R.M."/>
            <person name="Devlin K."/>
            <person name="Feltwell T."/>
            <person name="Gentles S."/>
            <person name="Hamlin N."/>
            <person name="Holroyd S."/>
            <person name="Hornsby T."/>
            <person name="Jagels K."/>
            <person name="Krogh A."/>
            <person name="McLean J."/>
            <person name="Moule S."/>
            <person name="Murphy L.D."/>
            <person name="Oliver S."/>
            <person name="Osborne J."/>
            <person name="Quail M.A."/>
            <person name="Rajandream M.A."/>
            <person name="Rogers J."/>
            <person name="Rutter S."/>
            <person name="Seeger K."/>
            <person name="Skelton S."/>
            <person name="Squares S."/>
            <person name="Squares R."/>
            <person name="Sulston J.E."/>
            <person name="Taylor K."/>
            <person name="Whitehead S."/>
            <person name="Barrell B.G."/>
        </authorList>
    </citation>
    <scope>NUCLEOTIDE SEQUENCE [LARGE SCALE GENOMIC DNA]</scope>
    <source>
        <strain>ATCC 25618 / H37Rv</strain>
    </source>
</reference>
<reference key="2">
    <citation type="journal article" date="2006" name="J. Biol. Chem.">
        <title>Characterization of mRNA interferases from Mycobacterium tuberculosis.</title>
        <authorList>
            <person name="Zhu L."/>
            <person name="Zhang Y."/>
            <person name="Teh J.S."/>
            <person name="Zhang J."/>
            <person name="Connell N."/>
            <person name="Rubin H."/>
            <person name="Inouye M."/>
        </authorList>
    </citation>
    <scope>GENE NAME</scope>
    <scope>POSSIBLE FUNCTION</scope>
    <source>
        <strain>ATCC 25618 / H37Rv</strain>
    </source>
</reference>
<reference key="3">
    <citation type="journal article" date="2010" name="Nucleic Acids Res.">
        <title>Characterization of an interplay between a Mycobacterium tuberculosis MazF homolog, Rv1495 and its sole DNA topoisomerase I.</title>
        <authorList>
            <person name="Huang F."/>
            <person name="He Z.G."/>
        </authorList>
    </citation>
    <scope>EXPRESSION IN M.SMEGMATIS</scope>
    <scope>FUNCTION AS AN ANTITOXIN</scope>
    <source>
        <strain>ATCC 25618 / H37Rv</strain>
    </source>
</reference>
<sequence>MPFLVALSGIISGVRDHSMTVRLDQQTRQRLQDIVKGGYRSANAAIVDAINKRWEALHDEQLDAAYAAAIHDNPAYPYESEAERSAARARRNARQQRSAQ</sequence>
<evidence type="ECO:0000250" key="1">
    <source>
        <dbReference type="UniProtKB" id="O53451"/>
    </source>
</evidence>
<evidence type="ECO:0000256" key="2">
    <source>
        <dbReference type="SAM" id="MobiDB-lite"/>
    </source>
</evidence>
<evidence type="ECO:0000269" key="3">
    <source>
    </source>
</evidence>
<evidence type="ECO:0000303" key="4">
    <source>
    </source>
</evidence>
<evidence type="ECO:0000305" key="5"/>
<evidence type="ECO:0007829" key="6">
    <source>
        <dbReference type="PDB" id="5XE3"/>
    </source>
</evidence>
<keyword id="KW-0002">3D-structure</keyword>
<keyword id="KW-1185">Reference proteome</keyword>
<keyword id="KW-1277">Toxin-antitoxin system</keyword>
<feature type="chain" id="PRO_0000103858" description="Probable antitoxin MazE4">
    <location>
        <begin position="1"/>
        <end position="100"/>
    </location>
</feature>
<feature type="region of interest" description="Disordered" evidence="2">
    <location>
        <begin position="77"/>
        <end position="100"/>
    </location>
</feature>
<feature type="helix" evidence="6">
    <location>
        <begin position="25"/>
        <end position="36"/>
    </location>
</feature>
<feature type="helix" evidence="6">
    <location>
        <begin position="42"/>
        <end position="72"/>
    </location>
</feature>
<feature type="turn" evidence="6">
    <location>
        <begin position="74"/>
        <end position="77"/>
    </location>
</feature>
<feature type="strand" evidence="6">
    <location>
        <begin position="78"/>
        <end position="80"/>
    </location>
</feature>
<feature type="helix" evidence="6">
    <location>
        <begin position="81"/>
        <end position="98"/>
    </location>
</feature>
<gene>
    <name type="primary">mazE4</name>
    <name evidence="4" type="synonym">mazE-mt7</name>
    <name type="ordered locus">Rv1494</name>
    <name type="ORF">MTCY277.16</name>
</gene>
<proteinExistence type="evidence at protein level"/>
<organism>
    <name type="scientific">Mycobacterium tuberculosis (strain ATCC 25618 / H37Rv)</name>
    <dbReference type="NCBI Taxonomy" id="83332"/>
    <lineage>
        <taxon>Bacteria</taxon>
        <taxon>Bacillati</taxon>
        <taxon>Actinomycetota</taxon>
        <taxon>Actinomycetes</taxon>
        <taxon>Mycobacteriales</taxon>
        <taxon>Mycobacteriaceae</taxon>
        <taxon>Mycobacterium</taxon>
        <taxon>Mycobacterium tuberculosis complex</taxon>
    </lineage>
</organism>
<dbReference type="EMBL" id="AL123456">
    <property type="protein sequence ID" value="CCP44255.1"/>
    <property type="molecule type" value="Genomic_DNA"/>
</dbReference>
<dbReference type="PIR" id="A70712">
    <property type="entry name" value="A70712"/>
</dbReference>
<dbReference type="RefSeq" id="NP_216010.1">
    <property type="nucleotide sequence ID" value="NC_000962.3"/>
</dbReference>
<dbReference type="RefSeq" id="WP_003900349.1">
    <property type="nucleotide sequence ID" value="NZ_NVQJ01000004.1"/>
</dbReference>
<dbReference type="PDB" id="5XE3">
    <property type="method" value="X-ray"/>
    <property type="resolution" value="2.30 A"/>
    <property type="chains" value="E/F=19-99"/>
</dbReference>
<dbReference type="PDBsum" id="5XE3"/>
<dbReference type="SMR" id="P9WJ91"/>
<dbReference type="STRING" id="83332.Rv1494"/>
<dbReference type="PaxDb" id="83332-Rv1494"/>
<dbReference type="GeneID" id="45425474"/>
<dbReference type="GeneID" id="886502"/>
<dbReference type="KEGG" id="mtu:Rv1494"/>
<dbReference type="KEGG" id="mtv:RVBD_1494"/>
<dbReference type="TubercuList" id="Rv1494"/>
<dbReference type="eggNOG" id="ENOG5032MNZ">
    <property type="taxonomic scope" value="Bacteria"/>
</dbReference>
<dbReference type="InParanoid" id="P9WJ91"/>
<dbReference type="OrthoDB" id="4568633at2"/>
<dbReference type="Proteomes" id="UP000001584">
    <property type="component" value="Chromosome"/>
</dbReference>
<comment type="function">
    <text evidence="3">Antitoxin component of a type II toxin-antitoxin (TA) system. In M.smegmatis neutralizes the toxic effect of mRNA interferase MazF4, its cognate toxin, on growth.</text>
</comment>
<comment type="subunit">
    <text evidence="1">Forms a complex with cognate toxin MazF4.</text>
</comment>